<name>PVK1_PERBB</name>
<sequence>GSTGLIPFGRT</sequence>
<keyword id="KW-0027">Amidation</keyword>
<keyword id="KW-0903">Direct protein sequencing</keyword>
<keyword id="KW-0527">Neuropeptide</keyword>
<keyword id="KW-0964">Secreted</keyword>
<feature type="peptide" id="PRO_0000378757" description="Periviscerokinin-1" evidence="2">
    <location>
        <begin position="1"/>
        <end position="11"/>
    </location>
</feature>
<feature type="modified residue" description="Threonine amide" evidence="2">
    <location>
        <position position="11"/>
    </location>
</feature>
<evidence type="ECO:0000255" key="1"/>
<evidence type="ECO:0000269" key="2">
    <source>
    </source>
</evidence>
<evidence type="ECO:0000303" key="3">
    <source>
    </source>
</evidence>
<evidence type="ECO:0000305" key="4"/>
<organism>
    <name type="scientific">Perisphaeria aff. bicolor (strain BF-2008)</name>
    <name type="common">Cockroach</name>
    <dbReference type="NCBI Taxonomy" id="521515"/>
    <lineage>
        <taxon>Eukaryota</taxon>
        <taxon>Metazoa</taxon>
        <taxon>Ecdysozoa</taxon>
        <taxon>Arthropoda</taxon>
        <taxon>Hexapoda</taxon>
        <taxon>Insecta</taxon>
        <taxon>Pterygota</taxon>
        <taxon>Neoptera</taxon>
        <taxon>Polyneoptera</taxon>
        <taxon>Dictyoptera</taxon>
        <taxon>Blattodea</taxon>
        <taxon>Blaberoidea</taxon>
        <taxon>Blaberidae</taxon>
        <taxon>Perisphaerinae</taxon>
        <taxon>Perisphaeria</taxon>
    </lineage>
</organism>
<dbReference type="GO" id="GO:0005576">
    <property type="term" value="C:extracellular region"/>
    <property type="evidence" value="ECO:0007669"/>
    <property type="project" value="UniProtKB-SubCell"/>
</dbReference>
<dbReference type="GO" id="GO:0007218">
    <property type="term" value="P:neuropeptide signaling pathway"/>
    <property type="evidence" value="ECO:0007669"/>
    <property type="project" value="UniProtKB-KW"/>
</dbReference>
<dbReference type="InterPro" id="IPR013231">
    <property type="entry name" value="Periviscerokinin"/>
</dbReference>
<dbReference type="Pfam" id="PF08259">
    <property type="entry name" value="Periviscerokin"/>
    <property type="match status" value="1"/>
</dbReference>
<comment type="function">
    <text evidence="4">Mediates visceral muscle contractile activity (myotropic activity).</text>
</comment>
<comment type="subcellular location">
    <subcellularLocation>
        <location evidence="4">Secreted</location>
    </subcellularLocation>
</comment>
<comment type="similarity">
    <text evidence="1">Belongs to the periviscerokinin family.</text>
</comment>
<protein>
    <recommendedName>
        <fullName evidence="3">Periviscerokinin-1</fullName>
        <shortName evidence="3">PerBi-PVK-1</shortName>
    </recommendedName>
</protein>
<proteinExistence type="evidence at protein level"/>
<accession>P85705</accession>
<reference evidence="4" key="1">
    <citation type="journal article" date="2009" name="BMC Evol. Biol.">
        <title>A proteomic approach for studying insect phylogeny: CAPA peptides of ancient insect taxa (Dictyoptera, Blattoptera) as a test case.</title>
        <authorList>
            <person name="Roth S."/>
            <person name="Fromm B."/>
            <person name="Gaede G."/>
            <person name="Predel R."/>
        </authorList>
    </citation>
    <scope>PROTEIN SEQUENCE</scope>
    <scope>AMIDATION AT THR-11</scope>
    <source>
        <tissue evidence="2">Abdominal perisympathetic organs</tissue>
    </source>
</reference>